<keyword id="KW-0687">Ribonucleoprotein</keyword>
<keyword id="KW-0689">Ribosomal protein</keyword>
<keyword id="KW-0694">RNA-binding</keyword>
<keyword id="KW-0699">rRNA-binding</keyword>
<reference key="1">
    <citation type="journal article" date="2004" name="Proc. Natl. Acad. Sci. U.S.A.">
        <title>The genome sequence of the probiotic intestinal bacterium Lactobacillus johnsonii NCC 533.</title>
        <authorList>
            <person name="Pridmore R.D."/>
            <person name="Berger B."/>
            <person name="Desiere F."/>
            <person name="Vilanova D."/>
            <person name="Barretto C."/>
            <person name="Pittet A.-C."/>
            <person name="Zwahlen M.-C."/>
            <person name="Rouvet M."/>
            <person name="Altermann E."/>
            <person name="Barrangou R."/>
            <person name="Mollet B."/>
            <person name="Mercenier A."/>
            <person name="Klaenhammer T."/>
            <person name="Arigoni F."/>
            <person name="Schell M.A."/>
        </authorList>
    </citation>
    <scope>NUCLEOTIDE SEQUENCE [LARGE SCALE GENOMIC DNA]</scope>
    <source>
        <strain>CNCM I-1225 / La1 / NCC 533</strain>
    </source>
</reference>
<dbReference type="EMBL" id="AE017198">
    <property type="protein sequence ID" value="AAS08406.1"/>
    <property type="molecule type" value="Genomic_DNA"/>
</dbReference>
<dbReference type="RefSeq" id="WP_004895747.1">
    <property type="nucleotide sequence ID" value="NC_005362.1"/>
</dbReference>
<dbReference type="SMR" id="Q74L09"/>
<dbReference type="GeneID" id="83569836"/>
<dbReference type="KEGG" id="ljo:LJ_0415"/>
<dbReference type="eggNOG" id="COG0244">
    <property type="taxonomic scope" value="Bacteria"/>
</dbReference>
<dbReference type="HOGENOM" id="CLU_092227_2_0_9"/>
<dbReference type="Proteomes" id="UP000000581">
    <property type="component" value="Chromosome"/>
</dbReference>
<dbReference type="GO" id="GO:0015934">
    <property type="term" value="C:large ribosomal subunit"/>
    <property type="evidence" value="ECO:0007669"/>
    <property type="project" value="InterPro"/>
</dbReference>
<dbReference type="GO" id="GO:0070180">
    <property type="term" value="F:large ribosomal subunit rRNA binding"/>
    <property type="evidence" value="ECO:0007669"/>
    <property type="project" value="UniProtKB-UniRule"/>
</dbReference>
<dbReference type="GO" id="GO:0003735">
    <property type="term" value="F:structural constituent of ribosome"/>
    <property type="evidence" value="ECO:0007669"/>
    <property type="project" value="InterPro"/>
</dbReference>
<dbReference type="GO" id="GO:0006412">
    <property type="term" value="P:translation"/>
    <property type="evidence" value="ECO:0007669"/>
    <property type="project" value="UniProtKB-UniRule"/>
</dbReference>
<dbReference type="CDD" id="cd05797">
    <property type="entry name" value="Ribosomal_L10"/>
    <property type="match status" value="1"/>
</dbReference>
<dbReference type="Gene3D" id="3.30.70.1730">
    <property type="match status" value="1"/>
</dbReference>
<dbReference type="Gene3D" id="6.10.250.290">
    <property type="match status" value="1"/>
</dbReference>
<dbReference type="HAMAP" id="MF_00362">
    <property type="entry name" value="Ribosomal_uL10"/>
    <property type="match status" value="1"/>
</dbReference>
<dbReference type="InterPro" id="IPR001790">
    <property type="entry name" value="Ribosomal_uL10"/>
</dbReference>
<dbReference type="InterPro" id="IPR043141">
    <property type="entry name" value="Ribosomal_uL10-like_sf"/>
</dbReference>
<dbReference type="InterPro" id="IPR022973">
    <property type="entry name" value="Ribosomal_uL10_bac"/>
</dbReference>
<dbReference type="InterPro" id="IPR047865">
    <property type="entry name" value="Ribosomal_uL10_bac_type"/>
</dbReference>
<dbReference type="InterPro" id="IPR002363">
    <property type="entry name" value="Ribosomal_uL10_CS_bac"/>
</dbReference>
<dbReference type="NCBIfam" id="NF000955">
    <property type="entry name" value="PRK00099.1-1"/>
    <property type="match status" value="1"/>
</dbReference>
<dbReference type="PANTHER" id="PTHR11560">
    <property type="entry name" value="39S RIBOSOMAL PROTEIN L10, MITOCHONDRIAL"/>
    <property type="match status" value="1"/>
</dbReference>
<dbReference type="Pfam" id="PF00466">
    <property type="entry name" value="Ribosomal_L10"/>
    <property type="match status" value="1"/>
</dbReference>
<dbReference type="SUPFAM" id="SSF160369">
    <property type="entry name" value="Ribosomal protein L10-like"/>
    <property type="match status" value="1"/>
</dbReference>
<dbReference type="PROSITE" id="PS01109">
    <property type="entry name" value="RIBOSOMAL_L10"/>
    <property type="match status" value="1"/>
</dbReference>
<name>RL10_LACJO</name>
<organism>
    <name type="scientific">Lactobacillus johnsonii (strain CNCM I-12250 / La1 / NCC 533)</name>
    <dbReference type="NCBI Taxonomy" id="257314"/>
    <lineage>
        <taxon>Bacteria</taxon>
        <taxon>Bacillati</taxon>
        <taxon>Bacillota</taxon>
        <taxon>Bacilli</taxon>
        <taxon>Lactobacillales</taxon>
        <taxon>Lactobacillaceae</taxon>
        <taxon>Lactobacillus</taxon>
    </lineage>
</organism>
<feature type="chain" id="PRO_0000154645" description="Large ribosomal subunit protein uL10">
    <location>
        <begin position="1"/>
        <end position="166"/>
    </location>
</feature>
<protein>
    <recommendedName>
        <fullName evidence="1">Large ribosomal subunit protein uL10</fullName>
    </recommendedName>
    <alternativeName>
        <fullName evidence="2">50S ribosomal protein L10</fullName>
    </alternativeName>
</protein>
<comment type="function">
    <text evidence="1">Forms part of the ribosomal stalk, playing a central role in the interaction of the ribosome with GTP-bound translation factors.</text>
</comment>
<comment type="subunit">
    <text evidence="1">Part of the ribosomal stalk of the 50S ribosomal subunit. The N-terminus interacts with L11 and the large rRNA to form the base of the stalk. The C-terminus forms an elongated spine to which L12 dimers bind in a sequential fashion forming a multimeric L10(L12)X complex.</text>
</comment>
<comment type="similarity">
    <text evidence="1">Belongs to the universal ribosomal protein uL10 family.</text>
</comment>
<proteinExistence type="inferred from homology"/>
<gene>
    <name evidence="1" type="primary">rplJ</name>
    <name type="ordered locus">LJ_0415</name>
</gene>
<evidence type="ECO:0000255" key="1">
    <source>
        <dbReference type="HAMAP-Rule" id="MF_00362"/>
    </source>
</evidence>
<evidence type="ECO:0000305" key="2"/>
<sequence length="166" mass="18056">MSKAIIAKKEKLVDDFAAELKEAKAILVIDYLGLTVEEVTNLRKDLRDANVKMKVIKNTYLKRAAEKAGIEGLEDTFVGPTAVVYTADAEDITEPARIVSKYEDDIDALSIKGGMLEGKVASQEEIKKLAAIPGREGLLSMLVSVLQAPVRNFAYAVKAVADSKDE</sequence>
<accession>Q74L09</accession>